<organism>
    <name type="scientific">Pseudocercospora fijiensis (strain CIRAD86)</name>
    <name type="common">Black leaf streak disease fungus</name>
    <name type="synonym">Mycosphaerella fijiensis</name>
    <dbReference type="NCBI Taxonomy" id="383855"/>
    <lineage>
        <taxon>Eukaryota</taxon>
        <taxon>Fungi</taxon>
        <taxon>Dikarya</taxon>
        <taxon>Ascomycota</taxon>
        <taxon>Pezizomycotina</taxon>
        <taxon>Dothideomycetes</taxon>
        <taxon>Dothideomycetidae</taxon>
        <taxon>Mycosphaerellales</taxon>
        <taxon>Mycosphaerellaceae</taxon>
        <taxon>Pseudocercospora</taxon>
    </lineage>
</organism>
<protein>
    <recommendedName>
        <fullName evidence="4">Transcriptional coactivator MYCFIDRAFT_190109</fullName>
    </recommendedName>
    <alternativeName>
        <fullName evidence="4">PKS8-1 gene cluster protein MYCFIDRAFT_190109</fullName>
    </alternativeName>
</protein>
<proteinExistence type="evidence at transcript level"/>
<comment type="function">
    <text evidence="3 6">Transcriptional coactivator; part of the gene cluster that mediates the biosynthesis of an emodin derivative that may be involved in black Sigatoka disease of banana (PubMed:30735556). With MYCFIDRAFT_198930, coregulates the production of the PKS8-1 cluster product (Probable).</text>
</comment>
<comment type="subcellular location">
    <subcellularLocation>
        <location evidence="5">Nucleus</location>
    </subcellularLocation>
</comment>
<comment type="induction">
    <text evidence="3">Expression is up-regulated during banana leaves infection.</text>
</comment>
<accession>M2YMT1</accession>
<dbReference type="EMBL" id="KB446562">
    <property type="protein sequence ID" value="EME79050.1"/>
    <property type="molecule type" value="Genomic_DNA"/>
</dbReference>
<dbReference type="RefSeq" id="XP_007929877.1">
    <property type="nucleotide sequence ID" value="XM_007931686.1"/>
</dbReference>
<dbReference type="SMR" id="M2YMT1"/>
<dbReference type="GeneID" id="19335126"/>
<dbReference type="KEGG" id="pfj:MYCFIDRAFT_190109"/>
<dbReference type="VEuPathDB" id="FungiDB:MYCFIDRAFT_190109"/>
<dbReference type="eggNOG" id="KOG3178">
    <property type="taxonomic scope" value="Eukaryota"/>
</dbReference>
<dbReference type="HOGENOM" id="CLU_005533_11_0_1"/>
<dbReference type="OrthoDB" id="2410195at2759"/>
<dbReference type="Proteomes" id="UP000016932">
    <property type="component" value="Unassembled WGS sequence"/>
</dbReference>
<dbReference type="GO" id="GO:0005634">
    <property type="term" value="C:nucleus"/>
    <property type="evidence" value="ECO:0007669"/>
    <property type="project" value="UniProtKB-SubCell"/>
</dbReference>
<dbReference type="GO" id="GO:0003677">
    <property type="term" value="F:DNA binding"/>
    <property type="evidence" value="ECO:0007669"/>
    <property type="project" value="UniProtKB-KW"/>
</dbReference>
<dbReference type="Gene3D" id="3.40.50.150">
    <property type="entry name" value="Vaccinia Virus protein VP39"/>
    <property type="match status" value="1"/>
</dbReference>
<dbReference type="Gene3D" id="1.10.10.10">
    <property type="entry name" value="Winged helix-like DNA-binding domain superfamily/Winged helix DNA-binding domain"/>
    <property type="match status" value="1"/>
</dbReference>
<dbReference type="InterPro" id="IPR029063">
    <property type="entry name" value="SAM-dependent_MTases_sf"/>
</dbReference>
<dbReference type="InterPro" id="IPR036388">
    <property type="entry name" value="WH-like_DNA-bd_sf"/>
</dbReference>
<dbReference type="InterPro" id="IPR036390">
    <property type="entry name" value="WH_DNA-bd_sf"/>
</dbReference>
<dbReference type="PANTHER" id="PTHR43712:SF15">
    <property type="entry name" value="MONODICTYPHENONE CLUSTER TRANSCRIPTIONAL COACTIVATOR MDPA"/>
    <property type="match status" value="1"/>
</dbReference>
<dbReference type="PANTHER" id="PTHR43712">
    <property type="entry name" value="PUTATIVE (AFU_ORTHOLOGUE AFUA_4G14580)-RELATED"/>
    <property type="match status" value="1"/>
</dbReference>
<dbReference type="SUPFAM" id="SSF46785">
    <property type="entry name" value="Winged helix' DNA-binding domain"/>
    <property type="match status" value="1"/>
</dbReference>
<gene>
    <name type="ORF">MYCFIDRAFT_190109</name>
</gene>
<evidence type="ECO:0000255" key="1"/>
<evidence type="ECO:0000255" key="2">
    <source>
        <dbReference type="PROSITE-ProRule" id="PRU00393"/>
    </source>
</evidence>
<evidence type="ECO:0000269" key="3">
    <source>
    </source>
</evidence>
<evidence type="ECO:0000303" key="4">
    <source>
    </source>
</evidence>
<evidence type="ECO:0000305" key="5"/>
<evidence type="ECO:0000305" key="6">
    <source>
    </source>
</evidence>
<keyword id="KW-0238">DNA-binding</keyword>
<keyword id="KW-0539">Nucleus</keyword>
<keyword id="KW-1185">Reference proteome</keyword>
<keyword id="KW-0804">Transcription</keyword>
<keyword id="KW-0805">Transcription regulation</keyword>
<reference key="1">
    <citation type="journal article" date="2012" name="PLoS Pathog.">
        <title>Diverse lifestyles and strategies of plant pathogenesis encoded in the genomes of eighteen Dothideomycetes fungi.</title>
        <authorList>
            <person name="Ohm R.A."/>
            <person name="Feau N."/>
            <person name="Henrissat B."/>
            <person name="Schoch C.L."/>
            <person name="Horwitz B.A."/>
            <person name="Barry K.W."/>
            <person name="Condon B.J."/>
            <person name="Copeland A.C."/>
            <person name="Dhillon B."/>
            <person name="Glaser F."/>
            <person name="Hesse C.N."/>
            <person name="Kosti I."/>
            <person name="LaButti K."/>
            <person name="Lindquist E.A."/>
            <person name="Lucas S."/>
            <person name="Salamov A.A."/>
            <person name="Bradshaw R.E."/>
            <person name="Ciuffetti L."/>
            <person name="Hamelin R.C."/>
            <person name="Kema G.H.J."/>
            <person name="Lawrence C."/>
            <person name="Scott J.A."/>
            <person name="Spatafora J.W."/>
            <person name="Turgeon B.G."/>
            <person name="de Wit P.J.G.M."/>
            <person name="Zhong S."/>
            <person name="Goodwin S.B."/>
            <person name="Grigoriev I.V."/>
        </authorList>
    </citation>
    <scope>NUCLEOTIDE SEQUENCE [LARGE SCALE GENOMIC DNA]</scope>
    <source>
        <strain>CIRAD86</strain>
    </source>
</reference>
<reference key="2">
    <citation type="journal article" date="2016" name="PLoS ONE">
        <title>Bioinformatics prediction of polyketide synthase gene clusters from Mycosphaerella fijiensis.</title>
        <authorList>
            <person name="Noar R.D."/>
            <person name="Daub M.E."/>
        </authorList>
    </citation>
    <scope>IDENTIFICATION</scope>
    <scope>FUNCTION</scope>
</reference>
<reference key="3">
    <citation type="journal article" date="2019" name="PLoS ONE">
        <title>A novel polyketide synthase gene cluster in the plant pathogenic fungus Pseudocercospora fijiensis.</title>
        <authorList>
            <person name="Noar R.D."/>
            <person name="Thomas E."/>
            <person name="Daub M.E."/>
        </authorList>
    </citation>
    <scope>FUNCTION</scope>
    <scope>INDUCTION</scope>
    <scope>PATHWAY</scope>
</reference>
<feature type="chain" id="PRO_5004030338" description="Transcriptional coactivator MYCFIDRAFT_190109" evidence="1">
    <location>
        <begin position="1"/>
        <end position="360"/>
    </location>
</feature>
<feature type="domain" description="HTH iclR-type" evidence="2">
    <location>
        <begin position="3"/>
        <end position="67"/>
    </location>
</feature>
<feature type="DNA-binding region" description="H-T-H motif" evidence="2">
    <location>
        <begin position="33"/>
        <end position="52"/>
    </location>
</feature>
<name>PK81J_PSEFD</name>
<sequence length="360" mass="39117">MQGMALNQLLACLKWLGEFQVLACIPLKGSIHARDVADLTGVPETQLCRVVRLMATAGFLHEPRPGQIAHTVLSGAFVTDLSLLDAGMFLSETAAPVALHMATATERQSDLQASNSAYSVAFNTSQPFEAACVERSRLHRQWSAYSRCAGDAEDKTVELFGQLNWRSLGSATIVDSCAQSTDLVLELAKLYPSLHFVVQMNNAAAVQQEACRRPESEDVKRRMKIQERMPSAPQTVKDAAVYILRLPATLRPSAVQILAELRAHLGALRANSSATLILATPLLPEPGTLDPDSEARARVRDLARLQLTNETDLELSELIELVNGVHDSNGRFRVVSKLRSRDSAATAALGIKYQAVPTAP</sequence>